<evidence type="ECO:0000305" key="1"/>
<sequence>MFKFLVLTLGIISCQAYAEDTVIVNDHDISAIKDCWQKNSDDDTDVNVIKSCLRQEYNLVDAQLNKAYGEAYRYIEQVPRTGVKKPDTEQLNLLKKSQRAWLDFRDKECELILSNEDVQDLSDPYSESEWLSCMIIQTNTRTRQLQLYRNSEDFYPSPLTRG</sequence>
<gene>
    <name type="primary">yecT</name>
    <name type="ordered locus">b1877</name>
    <name type="ordered locus">JW5310</name>
</gene>
<keyword id="KW-1185">Reference proteome</keyword>
<organism>
    <name type="scientific">Escherichia coli (strain K12)</name>
    <dbReference type="NCBI Taxonomy" id="83333"/>
    <lineage>
        <taxon>Bacteria</taxon>
        <taxon>Pseudomonadati</taxon>
        <taxon>Pseudomonadota</taxon>
        <taxon>Gammaproteobacteria</taxon>
        <taxon>Enterobacterales</taxon>
        <taxon>Enterobacteriaceae</taxon>
        <taxon>Escherichia</taxon>
    </lineage>
</organism>
<reference key="1">
    <citation type="journal article" date="1997" name="Science">
        <title>The complete genome sequence of Escherichia coli K-12.</title>
        <authorList>
            <person name="Blattner F.R."/>
            <person name="Plunkett G. III"/>
            <person name="Bloch C.A."/>
            <person name="Perna N.T."/>
            <person name="Burland V."/>
            <person name="Riley M."/>
            <person name="Collado-Vides J."/>
            <person name="Glasner J.D."/>
            <person name="Rode C.K."/>
            <person name="Mayhew G.F."/>
            <person name="Gregor J."/>
            <person name="Davis N.W."/>
            <person name="Kirkpatrick H.A."/>
            <person name="Goeden M.A."/>
            <person name="Rose D.J."/>
            <person name="Mau B."/>
            <person name="Shao Y."/>
        </authorList>
    </citation>
    <scope>NUCLEOTIDE SEQUENCE [LARGE SCALE GENOMIC DNA]</scope>
    <source>
        <strain>K12 / MG1655 / ATCC 47076</strain>
    </source>
</reference>
<reference key="2">
    <citation type="journal article" date="2006" name="Mol. Syst. Biol.">
        <title>Highly accurate genome sequences of Escherichia coli K-12 strains MG1655 and W3110.</title>
        <authorList>
            <person name="Hayashi K."/>
            <person name="Morooka N."/>
            <person name="Yamamoto Y."/>
            <person name="Fujita K."/>
            <person name="Isono K."/>
            <person name="Choi S."/>
            <person name="Ohtsubo E."/>
            <person name="Baba T."/>
            <person name="Wanner B.L."/>
            <person name="Mori H."/>
            <person name="Horiuchi T."/>
        </authorList>
    </citation>
    <scope>NUCLEOTIDE SEQUENCE [LARGE SCALE GENOMIC DNA]</scope>
    <source>
        <strain>K12 / W3110 / ATCC 27325 / DSM 5911</strain>
    </source>
</reference>
<feature type="chain" id="PRO_0000169088" description="Uncharacterized protein YecT">
    <location>
        <begin position="1"/>
        <end position="162"/>
    </location>
</feature>
<protein>
    <recommendedName>
        <fullName>Uncharacterized protein YecT</fullName>
    </recommendedName>
</protein>
<name>YECT_ECOLI</name>
<proteinExistence type="predicted"/>
<dbReference type="EMBL" id="U00096">
    <property type="protein sequence ID" value="AAC74947.2"/>
    <property type="molecule type" value="Genomic_DNA"/>
</dbReference>
<dbReference type="EMBL" id="AP009048">
    <property type="protein sequence ID" value="BAE76549.1"/>
    <property type="molecule type" value="Genomic_DNA"/>
</dbReference>
<dbReference type="PIR" id="E64950">
    <property type="entry name" value="E64950"/>
</dbReference>
<dbReference type="RefSeq" id="NP_416391.4">
    <property type="nucleotide sequence ID" value="NC_000913.3"/>
</dbReference>
<dbReference type="RefSeq" id="WP_001299676.1">
    <property type="nucleotide sequence ID" value="NZ_SSZK01000001.1"/>
</dbReference>
<dbReference type="SMR" id="P76296"/>
<dbReference type="BioGRID" id="4260369">
    <property type="interactions" value="25"/>
</dbReference>
<dbReference type="FunCoup" id="P76296">
    <property type="interactions" value="18"/>
</dbReference>
<dbReference type="STRING" id="511145.b1877"/>
<dbReference type="PaxDb" id="511145-b1877"/>
<dbReference type="EnsemblBacteria" id="AAC74947">
    <property type="protein sequence ID" value="AAC74947"/>
    <property type="gene ID" value="b1877"/>
</dbReference>
<dbReference type="GeneID" id="946511"/>
<dbReference type="KEGG" id="ecj:JW5310"/>
<dbReference type="KEGG" id="eco:b1877"/>
<dbReference type="KEGG" id="ecoc:C3026_10680"/>
<dbReference type="PATRIC" id="fig|511145.12.peg.1957"/>
<dbReference type="EchoBASE" id="EB4063"/>
<dbReference type="eggNOG" id="COG3755">
    <property type="taxonomic scope" value="Bacteria"/>
</dbReference>
<dbReference type="HOGENOM" id="CLU_138564_0_0_6"/>
<dbReference type="InParanoid" id="P76296"/>
<dbReference type="OMA" id="HNSEDFY"/>
<dbReference type="OrthoDB" id="7340239at2"/>
<dbReference type="BioCyc" id="EcoCyc:G7026-MONOMER"/>
<dbReference type="PRO" id="PR:P76296"/>
<dbReference type="Proteomes" id="UP000000625">
    <property type="component" value="Chromosome"/>
</dbReference>
<dbReference type="Gene3D" id="1.20.1270.180">
    <property type="match status" value="1"/>
</dbReference>
<dbReference type="InterPro" id="IPR009739">
    <property type="entry name" value="LprI-like_N"/>
</dbReference>
<dbReference type="Pfam" id="PF07007">
    <property type="entry name" value="LprI"/>
    <property type="match status" value="1"/>
</dbReference>
<comment type="similarity">
    <text evidence="1">To R.meliloti R02472.</text>
</comment>
<accession>P76296</accession>
<accession>Q2MB07</accession>